<sequence>MAFQSALEALNSTTHRDASTNPILNSVVEPLRDSLSLYPWLLPKEAVPHLLSWGIPNSGLGVTPHPHPIHKTVETFLLFNHWHALARLPSTVMFMKPSKFQKLAALNPKFQELINFRLTAADTTRYPSTSLTFPSNSICFMHDALMYFSPAQIVDLFTQSPALETLYCSLIVPPESHFTDLSLFPEIYTYKISGQTLHYIPENHHSGSYNQPLQAPSWLKISSILSPSLALSVTKLESWGPVHSILIQRGLPPKPSLSARPPVLPNQPPRATTPNSQNQLLHQTSQLFFQLQQPQLSLVSFRIPDCVELPQATFLRQPLRHRLVPTSVYNALFTYTRAVRTLRTSDPAGFVRTQSNKPEHAWVTPNAWDNLQTLSVNAPHRPQVCYHFFSSPVARLKLHFAQHWRAYLLALTPFLTTSPLLLPLFNFNTPFPLPRLLSLFRRSVSSPRLLHSILPSQLRGAAIPNRPLPLWVTKLHHFLDSHSLLPTPPIRPRIELQRLPLMSLIPKPKIVLPLLSLLLSSPTIYIHFFQAQTPQQLHDNYHLHLHPSRFELSWTLQSYHVTQAQSFLPLLLPAPTQAQASNPAPRPPAFHAIPLPPQPSTSSSPPLQEPTLSPHLIHPPLTREPSPLNGCACDSALLPSTAAMTSAEHPTPLNPPTPSPTPDVPPPDSPGNPSLLKQVPPEANLHPIHNPDLPSSTTLPSGALTLVPAKTPSIYANPTPPSSHPFTPLADDPTAVGPCLPFHVLHPADYFPLSAEFLTRTRHVPPSSLSHPKLNCLLTCFSELSGHSESDLWLSLQSILPDSQLQNPEVSTLGLSTDILTALCFIYHSSVTLHAPSGVYHYGIASSSTVYVIHYQPGPPPHFSLSPRLAASAPRCNPTNSRLVRQALRFKLNGEFLPFTQAYAHESSITHAKNLISNMKNGFDGIMSSLTDSSKGPSPREKLTTLDSLIDVAAPREVSLIHIAGFAGCGKTHPIQKLLQTSPFHDFRISCPTNELRSEWKRDMQPTAENVWRFSTWESSLLKHSEILVIDEIYKLPRGYLDLSILADPTLSLVIILGDPLQGEYHSTSPHSSNHFLPSEVHRFKSYIDCYCFWSHRIPKQIASLFGVVCHNTNEGFVRALTSHPPNSKNLTNATNTALSLQQMGHHAITISARRVTFTEAHTILLDRHTNLLSPNNCLVALTRSRTGVYFVGNLHLASNSFGTNYMFSQALCQGTIDLNNVFPHIMPHLPKMYEPIRSRSNRFVSGSLNFRPTTNSRLLSSLTKPTHLPPHIPTNHSLDVLVSNPVLLGETLDPRLEVLHLPPTRLPLHLDLLPTVPSSSSFSSVDHLFPTPISPAICGYTFENLAAFFLPAHDPDLKEVLINDQKSNQFPYLDAPFELSCQPSSLLAPIHKPASDPTLLPGSIKKRLRFRASSSPYSITPSDQLLGQHLFSSLCLAYGRNPNSVLPFQPELFSECICINDYAQLSSKTQATIVANHQRSDPDWRLTAVRIFAKAQHKVNDASIFSGWKACQTLALMHGYIILVLGPVKKYQRIFDSKDRPPHIYYHCGKTPSQLSQWCQTHLSGSSYIANDYTAFDQSQHGEAVVLECLKMRRLSIPDSLIQLHSHLKCSVDTQFGPLTCMRLTGEPGTYDDNSDYNLAVIYSQYSLNGHPILISGDDSVLCGTPPPSPLWPTLKKMLHLRFKIERTSHPLFCGYYVSPHGAARNPYALFAKLMICVDDKSLHDKKLSYLSEFSTGHLAGDLVTSILPSHLLPYQSAVHDFFCRNCTPAEKILLSLDPIPESKILQLILKVRWASQAFFSYLPQKARELLVARSSLPSLYSNPKVSQLESELLPFSQ</sequence>
<dbReference type="EC" id="2.1.1.-"/>
<dbReference type="EC" id="3.4.22.-"/>
<dbReference type="EC" id="3.6.4.-"/>
<dbReference type="EC" id="2.7.7.48"/>
<dbReference type="EMBL" id="J04374">
    <property type="protein sequence ID" value="AAA43039.1"/>
    <property type="molecule type" value="Genomic_RNA"/>
</dbReference>
<dbReference type="PIR" id="JQ0102">
    <property type="entry name" value="RRWPEM"/>
</dbReference>
<dbReference type="RefSeq" id="NP_040968.1">
    <property type="nucleotide sequence ID" value="NC_001480.1"/>
</dbReference>
<dbReference type="MEROPS" id="C21.001"/>
<dbReference type="GeneID" id="1493960"/>
<dbReference type="KEGG" id="vg:1493960"/>
<dbReference type="Proteomes" id="UP000008664">
    <property type="component" value="Genome"/>
</dbReference>
<dbReference type="GO" id="GO:0005524">
    <property type="term" value="F:ATP binding"/>
    <property type="evidence" value="ECO:0007669"/>
    <property type="project" value="UniProtKB-KW"/>
</dbReference>
<dbReference type="GO" id="GO:0004197">
    <property type="term" value="F:cysteine-type endopeptidase activity"/>
    <property type="evidence" value="ECO:0007669"/>
    <property type="project" value="InterPro"/>
</dbReference>
<dbReference type="GO" id="GO:0008174">
    <property type="term" value="F:mRNA methyltransferase activity"/>
    <property type="evidence" value="ECO:0007669"/>
    <property type="project" value="InterPro"/>
</dbReference>
<dbReference type="GO" id="GO:0003723">
    <property type="term" value="F:RNA binding"/>
    <property type="evidence" value="ECO:0007669"/>
    <property type="project" value="InterPro"/>
</dbReference>
<dbReference type="GO" id="GO:0003968">
    <property type="term" value="F:RNA-directed RNA polymerase activity"/>
    <property type="evidence" value="ECO:0007669"/>
    <property type="project" value="UniProtKB-KW"/>
</dbReference>
<dbReference type="GO" id="GO:0006351">
    <property type="term" value="P:DNA-templated transcription"/>
    <property type="evidence" value="ECO:0007669"/>
    <property type="project" value="InterPro"/>
</dbReference>
<dbReference type="GO" id="GO:0032259">
    <property type="term" value="P:methylation"/>
    <property type="evidence" value="ECO:0007669"/>
    <property type="project" value="UniProtKB-KW"/>
</dbReference>
<dbReference type="GO" id="GO:0016556">
    <property type="term" value="P:mRNA modification"/>
    <property type="evidence" value="ECO:0007669"/>
    <property type="project" value="InterPro"/>
</dbReference>
<dbReference type="GO" id="GO:0006508">
    <property type="term" value="P:proteolysis"/>
    <property type="evidence" value="ECO:0007669"/>
    <property type="project" value="UniProtKB-KW"/>
</dbReference>
<dbReference type="GO" id="GO:0006396">
    <property type="term" value="P:RNA processing"/>
    <property type="evidence" value="ECO:0007669"/>
    <property type="project" value="InterPro"/>
</dbReference>
<dbReference type="GO" id="GO:0039648">
    <property type="term" value="P:symbiont-mediated perturbation of host ubiquitin-like protein modification"/>
    <property type="evidence" value="ECO:0007669"/>
    <property type="project" value="UniProtKB-KW"/>
</dbReference>
<dbReference type="GO" id="GO:0039694">
    <property type="term" value="P:viral RNA genome replication"/>
    <property type="evidence" value="ECO:0007669"/>
    <property type="project" value="InterPro"/>
</dbReference>
<dbReference type="CDD" id="cd23247">
    <property type="entry name" value="Tymoviridae_RdRp"/>
    <property type="match status" value="1"/>
</dbReference>
<dbReference type="Gene3D" id="3.90.70.100">
    <property type="match status" value="1"/>
</dbReference>
<dbReference type="Gene3D" id="3.40.50.300">
    <property type="entry name" value="P-loop containing nucleotide triphosphate hydrolases"/>
    <property type="match status" value="1"/>
</dbReference>
<dbReference type="InterPro" id="IPR027351">
    <property type="entry name" value="(+)RNA_virus_helicase_core_dom"/>
</dbReference>
<dbReference type="InterPro" id="IPR002588">
    <property type="entry name" value="Alphavirus-like_MT_dom"/>
</dbReference>
<dbReference type="InterPro" id="IPR043502">
    <property type="entry name" value="DNA/RNA_pol_sf"/>
</dbReference>
<dbReference type="InterPro" id="IPR027417">
    <property type="entry name" value="P-loop_NTPase"/>
</dbReference>
<dbReference type="InterPro" id="IPR008043">
    <property type="entry name" value="Peptidase_C21"/>
</dbReference>
<dbReference type="InterPro" id="IPR001788">
    <property type="entry name" value="RNA-dep_RNA_pol_alsuvir"/>
</dbReference>
<dbReference type="InterPro" id="IPR007094">
    <property type="entry name" value="RNA-dir_pol_PSvirus"/>
</dbReference>
<dbReference type="InterPro" id="IPR043181">
    <property type="entry name" value="TYMV_endopept_dom"/>
</dbReference>
<dbReference type="PANTHER" id="PTHR13037">
    <property type="entry name" value="FORMIN"/>
    <property type="match status" value="1"/>
</dbReference>
<dbReference type="PANTHER" id="PTHR13037:SF24">
    <property type="entry name" value="POLYCOMB PROTEIN PCL-RELATED"/>
    <property type="match status" value="1"/>
</dbReference>
<dbReference type="Pfam" id="PF05381">
    <property type="entry name" value="Peptidase_C21"/>
    <property type="match status" value="1"/>
</dbReference>
<dbReference type="Pfam" id="PF00978">
    <property type="entry name" value="RdRP_2"/>
    <property type="match status" value="1"/>
</dbReference>
<dbReference type="Pfam" id="PF01443">
    <property type="entry name" value="Viral_helicase1"/>
    <property type="match status" value="1"/>
</dbReference>
<dbReference type="Pfam" id="PF01660">
    <property type="entry name" value="Vmethyltransf"/>
    <property type="match status" value="1"/>
</dbReference>
<dbReference type="SUPFAM" id="SSF56672">
    <property type="entry name" value="DNA/RNA polymerases"/>
    <property type="match status" value="1"/>
</dbReference>
<dbReference type="SUPFAM" id="SSF52540">
    <property type="entry name" value="P-loop containing nucleoside triphosphate hydrolases"/>
    <property type="match status" value="1"/>
</dbReference>
<dbReference type="PROSITE" id="PS51743">
    <property type="entry name" value="ALPHAVIRUS_MT"/>
    <property type="match status" value="1"/>
</dbReference>
<dbReference type="PROSITE" id="PS51738">
    <property type="entry name" value="PEPTIDASE_C21"/>
    <property type="match status" value="1"/>
</dbReference>
<dbReference type="PROSITE" id="PS51657">
    <property type="entry name" value="PSRV_HELICASE"/>
    <property type="match status" value="1"/>
</dbReference>
<dbReference type="PROSITE" id="PS50507">
    <property type="entry name" value="RDRP_SSRNA_POS"/>
    <property type="match status" value="1"/>
</dbReference>
<reference key="1">
    <citation type="journal article" date="1989" name="Virology">
        <title>Nucleotide sequence of the genome of eggplant mosaic tymovirus.</title>
        <authorList>
            <person name="Osorio-Keese M.E."/>
            <person name="Keese P."/>
            <person name="Gibbs A."/>
        </authorList>
    </citation>
    <scope>NUCLEOTIDE SEQUENCE [GENOMIC RNA]</scope>
</reference>
<organismHost>
    <name type="scientific">Solanum lycopersicum</name>
    <name type="common">Tomato</name>
    <name type="synonym">Lycopersicon esculentum</name>
    <dbReference type="NCBI Taxonomy" id="4081"/>
</organismHost>
<organismHost>
    <name type="scientific">Solanum melongena</name>
    <name type="common">eggplant</name>
    <dbReference type="NCBI Taxonomy" id="4111"/>
</organismHost>
<organismHost>
    <name type="scientific">Solanum seaforthianum</name>
    <name type="common">Brazilian nightshade</name>
    <dbReference type="NCBI Taxonomy" id="45840"/>
</organismHost>
<evidence type="ECO:0000250" key="1"/>
<evidence type="ECO:0000250" key="2">
    <source>
        <dbReference type="UniProtKB" id="P10358"/>
    </source>
</evidence>
<evidence type="ECO:0000250" key="3">
    <source>
        <dbReference type="UniProtKB" id="Q91TW9"/>
    </source>
</evidence>
<evidence type="ECO:0000255" key="4">
    <source>
        <dbReference type="PROSITE-ProRule" id="PRU00539"/>
    </source>
</evidence>
<evidence type="ECO:0000255" key="5">
    <source>
        <dbReference type="PROSITE-ProRule" id="PRU01074"/>
    </source>
</evidence>
<evidence type="ECO:0000255" key="6">
    <source>
        <dbReference type="PROSITE-ProRule" id="PRU01079"/>
    </source>
</evidence>
<evidence type="ECO:0000256" key="7">
    <source>
        <dbReference type="SAM" id="MobiDB-lite"/>
    </source>
</evidence>
<evidence type="ECO:0000305" key="8"/>
<keyword id="KW-0067">ATP-binding</keyword>
<keyword id="KW-0945">Host-virus interaction</keyword>
<keyword id="KW-0378">Hydrolase</keyword>
<keyword id="KW-0489">Methyltransferase</keyword>
<keyword id="KW-1127">Modulation of host ubiquitin pathway by viral deubiquitinase</keyword>
<keyword id="KW-1130">Modulation of host ubiquitin pathway by virus</keyword>
<keyword id="KW-0511">Multifunctional enzyme</keyword>
<keyword id="KW-0547">Nucleotide-binding</keyword>
<keyword id="KW-0548">Nucleotidyltransferase</keyword>
<keyword id="KW-0645">Protease</keyword>
<keyword id="KW-0696">RNA-directed RNA polymerase</keyword>
<keyword id="KW-0788">Thiol protease</keyword>
<keyword id="KW-0808">Transferase</keyword>
<keyword id="KW-0693">Viral RNA replication</keyword>
<protein>
    <recommendedName>
        <fullName evidence="8">Non-structural replication polyprotein</fullName>
    </recommendedName>
    <component>
        <recommendedName>
            <fullName>Methyltransferase/Protease</fullName>
            <ecNumber>2.1.1.-</ecNumber>
            <ecNumber>3.4.22.-</ecNumber>
        </recommendedName>
        <alternativeName>
            <fullName>MET/PRO</fullName>
        </alternativeName>
    </component>
    <component>
        <recommendedName>
            <fullName>Putative helicase</fullName>
            <ecNumber>3.6.4.-</ecNumber>
        </recommendedName>
        <alternativeName>
            <fullName>HEL</fullName>
        </alternativeName>
    </component>
    <component>
        <recommendedName>
            <fullName>RNA-directed RNA polymerase</fullName>
            <ecNumber>2.7.7.48</ecNumber>
        </recommendedName>
        <alternativeName>
            <fullName>POL</fullName>
        </alternativeName>
    </component>
</protein>
<accession>P20126</accession>
<comment type="function">
    <molecule>Methyltransferase/Protease</molecule>
    <text evidence="2 3">Acts as a cysteine protease, methyltransferase and deubiquitinase (By similarity). The cysteine protease activity cleaves the polyprotein giving rise to mature proteins (By similarity). The methyltransferase domain is probably involved in viral RNA capping (By similarity).</text>
</comment>
<comment type="function">
    <molecule>RNA-directed RNA polymerase</molecule>
    <text evidence="2">RNA-directed RNA polymerase is responsible for the replication and transcription of the genome.</text>
</comment>
<comment type="catalytic activity">
    <molecule>RNA-directed RNA polymerase</molecule>
    <reaction evidence="4">
        <text>RNA(n) + a ribonucleoside 5'-triphosphate = RNA(n+1) + diphosphate</text>
        <dbReference type="Rhea" id="RHEA:21248"/>
        <dbReference type="Rhea" id="RHEA-COMP:14527"/>
        <dbReference type="Rhea" id="RHEA-COMP:17342"/>
        <dbReference type="ChEBI" id="CHEBI:33019"/>
        <dbReference type="ChEBI" id="CHEBI:61557"/>
        <dbReference type="ChEBI" id="CHEBI:140395"/>
        <dbReference type="EC" id="2.7.7.48"/>
    </reaction>
</comment>
<comment type="PTM">
    <text evidence="3">Specific enzymatic cleavages by the host yield mature proteins.</text>
</comment>
<comment type="similarity">
    <text evidence="8">Belongs to the Tymoviridae non-structural replication polyprotein family.</text>
</comment>
<feature type="chain" id="PRO_0000222934" description="Non-structural replication polyprotein">
    <location>
        <begin position="1"/>
        <end position="1839"/>
    </location>
</feature>
<feature type="chain" id="PRO_0000460985" description="Methyltransferase/Protease">
    <location>
        <begin position="1"/>
        <end position="871" status="uncertain"/>
    </location>
</feature>
<feature type="chain" id="PRO_0000460986" description="Putative helicase">
    <location>
        <begin position="872" status="uncertain"/>
        <end position="1246" status="uncertain"/>
    </location>
</feature>
<feature type="chain" id="PRO_0000460987" description="RNA-directed RNA polymerase">
    <location>
        <begin position="1247" status="uncertain"/>
        <end position="1839"/>
    </location>
</feature>
<feature type="domain" description="Alphavirus-like MT" evidence="6">
    <location>
        <begin position="58"/>
        <end position="219"/>
    </location>
</feature>
<feature type="domain" description="Peptidase C21" evidence="5">
    <location>
        <begin position="723"/>
        <end position="877"/>
    </location>
</feature>
<feature type="domain" description="(+)RNA virus helicase ATP-binding">
    <location>
        <begin position="935"/>
        <end position="1092"/>
    </location>
</feature>
<feature type="domain" description="(+)RNA virus helicase C-terminal">
    <location>
        <begin position="1093"/>
        <end position="1224"/>
    </location>
</feature>
<feature type="domain" description="RdRp catalytic" evidence="4">
    <location>
        <begin position="1567"/>
        <end position="1673"/>
    </location>
</feature>
<feature type="region of interest" description="Disordered" evidence="7">
    <location>
        <begin position="253"/>
        <end position="277"/>
    </location>
</feature>
<feature type="region of interest" description="Disordered" evidence="7">
    <location>
        <begin position="578"/>
        <end position="623"/>
    </location>
</feature>
<feature type="region of interest" description="Disordered" evidence="7">
    <location>
        <begin position="645"/>
        <end position="703"/>
    </location>
</feature>
<feature type="compositionally biased region" description="Pro residues" evidence="7">
    <location>
        <begin position="584"/>
        <end position="599"/>
    </location>
</feature>
<feature type="compositionally biased region" description="Low complexity" evidence="7">
    <location>
        <begin position="600"/>
        <end position="614"/>
    </location>
</feature>
<feature type="compositionally biased region" description="Pro residues" evidence="7">
    <location>
        <begin position="652"/>
        <end position="670"/>
    </location>
</feature>
<feature type="active site" description="For protease activity" evidence="5">
    <location>
        <position position="776"/>
    </location>
</feature>
<feature type="active site" description="For protease activity" evidence="5">
    <location>
        <position position="862"/>
    </location>
</feature>
<feature type="binding site" evidence="1">
    <location>
        <begin position="965"/>
        <end position="972"/>
    </location>
    <ligand>
        <name>ATP</name>
        <dbReference type="ChEBI" id="CHEBI:30616"/>
    </ligand>
</feature>
<feature type="site" description="Cleavage; by viral protease" evidence="2">
    <location>
        <begin position="871"/>
        <end position="872"/>
    </location>
</feature>
<feature type="site" description="Cleavage; by viral protease" evidence="2">
    <location>
        <begin position="1246"/>
        <end position="1247"/>
    </location>
</feature>
<proteinExistence type="inferred from homology"/>
<organism>
    <name type="scientific">Eggplant mosaic virus</name>
    <dbReference type="NCBI Taxonomy" id="12151"/>
    <lineage>
        <taxon>Viruses</taxon>
        <taxon>Riboviria</taxon>
        <taxon>Orthornavirae</taxon>
        <taxon>Kitrinoviricota</taxon>
        <taxon>Alsuviricetes</taxon>
        <taxon>Tymovirales</taxon>
        <taxon>Tymoviridae</taxon>
        <taxon>Tymovirus</taxon>
        <taxon>Tymovirus melongenae</taxon>
    </lineage>
</organism>
<name>POLN_EPMV</name>